<organism>
    <name type="scientific">Leuconostoc citreum (strain KM20)</name>
    <dbReference type="NCBI Taxonomy" id="349519"/>
    <lineage>
        <taxon>Bacteria</taxon>
        <taxon>Bacillati</taxon>
        <taxon>Bacillota</taxon>
        <taxon>Bacilli</taxon>
        <taxon>Lactobacillales</taxon>
        <taxon>Lactobacillaceae</taxon>
        <taxon>Leuconostoc</taxon>
    </lineage>
</organism>
<reference key="1">
    <citation type="journal article" date="2008" name="J. Bacteriol.">
        <title>Complete genome sequence of Leuconostoc citreum KM20.</title>
        <authorList>
            <person name="Kim J.F."/>
            <person name="Jeong H."/>
            <person name="Lee J.-S."/>
            <person name="Choi S.-H."/>
            <person name="Ha M."/>
            <person name="Hur C.-G."/>
            <person name="Kim J.-S."/>
            <person name="Lee S."/>
            <person name="Park H.-S."/>
            <person name="Park Y.-H."/>
            <person name="Oh T.K."/>
        </authorList>
    </citation>
    <scope>NUCLEOTIDE SEQUENCE [LARGE SCALE GENOMIC DNA]</scope>
    <source>
        <strain>KM20</strain>
    </source>
</reference>
<keyword id="KW-0240">DNA-directed RNA polymerase</keyword>
<keyword id="KW-0548">Nucleotidyltransferase</keyword>
<keyword id="KW-1185">Reference proteome</keyword>
<keyword id="KW-0804">Transcription</keyword>
<keyword id="KW-0808">Transferase</keyword>
<proteinExistence type="inferred from homology"/>
<gene>
    <name evidence="1" type="primary">rpoE</name>
    <name type="ordered locus">LCK_00445</name>
</gene>
<evidence type="ECO:0000255" key="1">
    <source>
        <dbReference type="HAMAP-Rule" id="MF_00357"/>
    </source>
</evidence>
<evidence type="ECO:0000255" key="2">
    <source>
        <dbReference type="PROSITE-ProRule" id="PRU01261"/>
    </source>
</evidence>
<evidence type="ECO:0000256" key="3">
    <source>
        <dbReference type="SAM" id="MobiDB-lite"/>
    </source>
</evidence>
<protein>
    <recommendedName>
        <fullName evidence="1">Probable DNA-directed RNA polymerase subunit delta</fullName>
    </recommendedName>
    <alternativeName>
        <fullName evidence="1">RNAP delta factor</fullName>
    </alternativeName>
</protein>
<dbReference type="EMBL" id="DQ489736">
    <property type="protein sequence ID" value="ACA82278.1"/>
    <property type="molecule type" value="Genomic_DNA"/>
</dbReference>
<dbReference type="RefSeq" id="WP_004903195.1">
    <property type="nucleotide sequence ID" value="NC_010471.1"/>
</dbReference>
<dbReference type="SMR" id="B1MXM6"/>
<dbReference type="STRING" id="349519.LCK_00445"/>
<dbReference type="GeneID" id="61102623"/>
<dbReference type="KEGG" id="lci:LCK_00445"/>
<dbReference type="eggNOG" id="COG3343">
    <property type="taxonomic scope" value="Bacteria"/>
</dbReference>
<dbReference type="HOGENOM" id="CLU_116648_0_0_9"/>
<dbReference type="OrthoDB" id="401223at2"/>
<dbReference type="Proteomes" id="UP000002166">
    <property type="component" value="Chromosome"/>
</dbReference>
<dbReference type="GO" id="GO:0000428">
    <property type="term" value="C:DNA-directed RNA polymerase complex"/>
    <property type="evidence" value="ECO:0007669"/>
    <property type="project" value="UniProtKB-KW"/>
</dbReference>
<dbReference type="GO" id="GO:0003899">
    <property type="term" value="F:DNA-directed RNA polymerase activity"/>
    <property type="evidence" value="ECO:0007669"/>
    <property type="project" value="UniProtKB-UniRule"/>
</dbReference>
<dbReference type="GO" id="GO:0006351">
    <property type="term" value="P:DNA-templated transcription"/>
    <property type="evidence" value="ECO:0007669"/>
    <property type="project" value="InterPro"/>
</dbReference>
<dbReference type="GO" id="GO:0006355">
    <property type="term" value="P:regulation of DNA-templated transcription"/>
    <property type="evidence" value="ECO:0007669"/>
    <property type="project" value="UniProtKB-UniRule"/>
</dbReference>
<dbReference type="Gene3D" id="1.10.10.1250">
    <property type="entry name" value="RNA polymerase, subunit delta, N-terminal domain"/>
    <property type="match status" value="1"/>
</dbReference>
<dbReference type="HAMAP" id="MF_00357">
    <property type="entry name" value="RNApol_bact_RpoE"/>
    <property type="match status" value="1"/>
</dbReference>
<dbReference type="InterPro" id="IPR007759">
    <property type="entry name" value="Asxl_HARE-HTH"/>
</dbReference>
<dbReference type="InterPro" id="IPR038087">
    <property type="entry name" value="RNAP_delta_N_dom_sf"/>
</dbReference>
<dbReference type="InterPro" id="IPR029757">
    <property type="entry name" value="RpoE"/>
</dbReference>
<dbReference type="NCBIfam" id="TIGR04567">
    <property type="entry name" value="RNAP_delt_lowGC"/>
    <property type="match status" value="1"/>
</dbReference>
<dbReference type="Pfam" id="PF05066">
    <property type="entry name" value="HARE-HTH"/>
    <property type="match status" value="1"/>
</dbReference>
<dbReference type="PROSITE" id="PS51913">
    <property type="entry name" value="HTH_HARE"/>
    <property type="match status" value="1"/>
</dbReference>
<accession>B1MXM6</accession>
<comment type="function">
    <text evidence="1">Participates in both the initiation and recycling phases of transcription. In the presence of the delta subunit, RNAP displays an increased specificity of transcription, a decreased affinity for nucleic acids, and an increased efficiency of RNA synthesis because of enhanced recycling.</text>
</comment>
<comment type="subunit">
    <text evidence="1">RNAP is composed of a core of 2 alpha, a beta and a beta' subunits. The core is associated with a delta subunit and one of several sigma factors.</text>
</comment>
<comment type="similarity">
    <text evidence="1">Belongs to the RpoE family.</text>
</comment>
<name>RPOE_LEUCK</name>
<sequence length="193" mass="21513">MALTQLGNHPKEELALVEIATAILSEHKTVMPFSSLVEEIQDFLAVDAETFQSRLSQFYTDLNTDGSFISLGNNEWGLRAWYPVDAIDESIHEIDDDDDAPKRKKAAKKVNVFADSAADDDVIDYNDDDPEDEDFGEVTEEETDVDVDDSEVEVEDDEEEEIAVGDDETIDDNLTELTGTNDLDDLSDGDIEK</sequence>
<feature type="chain" id="PRO_1000120566" description="Probable DNA-directed RNA polymerase subunit delta">
    <location>
        <begin position="1"/>
        <end position="193"/>
    </location>
</feature>
<feature type="domain" description="HTH HARE-type" evidence="2">
    <location>
        <begin position="14"/>
        <end position="81"/>
    </location>
</feature>
<feature type="region of interest" description="Disordered" evidence="3">
    <location>
        <begin position="119"/>
        <end position="193"/>
    </location>
</feature>
<feature type="compositionally biased region" description="Acidic residues" evidence="3">
    <location>
        <begin position="119"/>
        <end position="174"/>
    </location>
</feature>
<feature type="compositionally biased region" description="Acidic residues" evidence="3">
    <location>
        <begin position="182"/>
        <end position="193"/>
    </location>
</feature>